<reference key="1">
    <citation type="journal article" date="1990" name="J. Virol.">
        <title>Evolution of influenza A virus PB2 genes: implications for evolution of the ribonucleoprotein complex and origin of human influenza A virus.</title>
        <authorList>
            <person name="Gorman O.T."/>
            <person name="Donis R.O."/>
            <person name="Kawaoka Y."/>
            <person name="Webster R.G."/>
        </authorList>
    </citation>
    <scope>NUCLEOTIDE SEQUENCE [GENOMIC RNA]</scope>
</reference>
<organism>
    <name type="scientific">Influenza A virus (strain A/Ruddy Turnstone/New Jersey/47/1985 H4N6)</name>
    <dbReference type="NCBI Taxonomy" id="380343"/>
    <lineage>
        <taxon>Viruses</taxon>
        <taxon>Riboviria</taxon>
        <taxon>Orthornavirae</taxon>
        <taxon>Negarnaviricota</taxon>
        <taxon>Polyploviricotina</taxon>
        <taxon>Insthoviricetes</taxon>
        <taxon>Articulavirales</taxon>
        <taxon>Orthomyxoviridae</taxon>
        <taxon>Alphainfluenzavirus</taxon>
        <taxon>Alphainfluenzavirus influenzae</taxon>
        <taxon>Influenza A virus</taxon>
    </lineage>
</organism>
<proteinExistence type="inferred from homology"/>
<evidence type="ECO:0000255" key="1">
    <source>
        <dbReference type="HAMAP-Rule" id="MF_04062"/>
    </source>
</evidence>
<organismHost>
    <name type="scientific">Aves</name>
    <dbReference type="NCBI Taxonomy" id="8782"/>
</organismHost>
<organismHost>
    <name type="scientific">Sus scrofa</name>
    <name type="common">Pig</name>
    <dbReference type="NCBI Taxonomy" id="9823"/>
</organismHost>
<comment type="function">
    <text evidence="1">Plays an essential role in transcription initiation and cap-stealing mechanism, in which cellular capped pre-mRNAs are used to generate primers for viral transcription. Recognizes and binds the 7-methylguanosine-containing cap of the target pre-RNA which is subsequently cleaved after 10-13 nucleotides by the viral protein PA. Plays a role in the initiation of the viral genome replication and modulates the activity of the ribonucleoprotein (RNP) complex.</text>
</comment>
<comment type="subunit">
    <text evidence="1">Influenza RNA polymerase is composed of three subunits: PB1, PB2 and PA. Interacts (via N-terminus) with PB1 (via C-terminus). Interacts with nucleoprotein NP (via N-terminus).</text>
</comment>
<comment type="subcellular location">
    <subcellularLocation>
        <location evidence="1">Virion</location>
    </subcellularLocation>
    <subcellularLocation>
        <location evidence="1">Host nucleus</location>
    </subcellularLocation>
</comment>
<comment type="similarity">
    <text evidence="1">Belongs to the influenza viruses PB2 family.</text>
</comment>
<keyword id="KW-1157">Cap snatching</keyword>
<keyword id="KW-1262">Eukaryotic host gene expression shutoff by virus</keyword>
<keyword id="KW-1191">Eukaryotic host transcription shutoff by virus</keyword>
<keyword id="KW-1190">Host gene expression shutoff by virus</keyword>
<keyword id="KW-1048">Host nucleus</keyword>
<keyword id="KW-0945">Host-virus interaction</keyword>
<keyword id="KW-1104">Inhibition of host RNA polymerase II by virus</keyword>
<keyword id="KW-0506">mRNA capping</keyword>
<keyword id="KW-0507">mRNA processing</keyword>
<keyword id="KW-1195">Viral transcription</keyword>
<keyword id="KW-0946">Virion</keyword>
<dbReference type="EMBL" id="M73518">
    <property type="protein sequence ID" value="AAA43136.1"/>
    <property type="molecule type" value="Genomic_RNA"/>
</dbReference>
<dbReference type="SMR" id="P26109"/>
<dbReference type="GO" id="GO:0042025">
    <property type="term" value="C:host cell nucleus"/>
    <property type="evidence" value="ECO:0007669"/>
    <property type="project" value="UniProtKB-SubCell"/>
</dbReference>
<dbReference type="GO" id="GO:0044423">
    <property type="term" value="C:virion component"/>
    <property type="evidence" value="ECO:0007669"/>
    <property type="project" value="UniProtKB-UniRule"/>
</dbReference>
<dbReference type="GO" id="GO:0003723">
    <property type="term" value="F:RNA binding"/>
    <property type="evidence" value="ECO:0007669"/>
    <property type="project" value="UniProtKB-UniRule"/>
</dbReference>
<dbReference type="GO" id="GO:0003968">
    <property type="term" value="F:RNA-directed RNA polymerase activity"/>
    <property type="evidence" value="ECO:0007669"/>
    <property type="project" value="UniProtKB-UniRule"/>
</dbReference>
<dbReference type="GO" id="GO:0006370">
    <property type="term" value="P:7-methylguanosine mRNA capping"/>
    <property type="evidence" value="ECO:0007669"/>
    <property type="project" value="UniProtKB-UniRule"/>
</dbReference>
<dbReference type="GO" id="GO:0075526">
    <property type="term" value="P:cap snatching"/>
    <property type="evidence" value="ECO:0007669"/>
    <property type="project" value="UniProtKB-UniRule"/>
</dbReference>
<dbReference type="GO" id="GO:0006351">
    <property type="term" value="P:DNA-templated transcription"/>
    <property type="evidence" value="ECO:0007669"/>
    <property type="project" value="UniProtKB-UniRule"/>
</dbReference>
<dbReference type="GO" id="GO:0039657">
    <property type="term" value="P:symbiont-mediated suppression of host gene expression"/>
    <property type="evidence" value="ECO:0007669"/>
    <property type="project" value="UniProtKB-KW"/>
</dbReference>
<dbReference type="GO" id="GO:0039523">
    <property type="term" value="P:symbiont-mediated suppression of host mRNA transcription via inhibition of RNA polymerase II activity"/>
    <property type="evidence" value="ECO:0007669"/>
    <property type="project" value="UniProtKB-UniRule"/>
</dbReference>
<dbReference type="GO" id="GO:0039694">
    <property type="term" value="P:viral RNA genome replication"/>
    <property type="evidence" value="ECO:0007669"/>
    <property type="project" value="InterPro"/>
</dbReference>
<dbReference type="FunFam" id="3.30.30.90:FF:000001">
    <property type="entry name" value="Polymerase basic protein 2"/>
    <property type="match status" value="1"/>
</dbReference>
<dbReference type="Gene3D" id="3.30.30.90">
    <property type="entry name" value="Polymerase Basic Protein 2, C-terminal domain"/>
    <property type="match status" value="1"/>
</dbReference>
<dbReference type="HAMAP" id="MF_04062">
    <property type="entry name" value="INV_PB2"/>
    <property type="match status" value="1"/>
</dbReference>
<dbReference type="InterPro" id="IPR049110">
    <property type="entry name" value="Flu_PB2_2nd"/>
</dbReference>
<dbReference type="InterPro" id="IPR049114">
    <property type="entry name" value="Flu_PB2_6th"/>
</dbReference>
<dbReference type="InterPro" id="IPR049115">
    <property type="entry name" value="Flu_PB2_C"/>
</dbReference>
<dbReference type="InterPro" id="IPR048298">
    <property type="entry name" value="Flu_PB2_CAP-bd"/>
</dbReference>
<dbReference type="InterPro" id="IPR049111">
    <property type="entry name" value="Flu_PB2_middle"/>
</dbReference>
<dbReference type="InterPro" id="IPR049106">
    <property type="entry name" value="Flu_PB2_N"/>
</dbReference>
<dbReference type="InterPro" id="IPR001591">
    <property type="entry name" value="INV_PB2"/>
</dbReference>
<dbReference type="InterPro" id="IPR049113">
    <property type="entry name" value="PB2_helical"/>
</dbReference>
<dbReference type="InterPro" id="IPR037258">
    <property type="entry name" value="PDB2_C"/>
</dbReference>
<dbReference type="Pfam" id="PF20947">
    <property type="entry name" value="Flu_PB2_1st"/>
    <property type="match status" value="1"/>
</dbReference>
<dbReference type="Pfam" id="PF20948">
    <property type="entry name" value="Flu_PB2_2nd"/>
    <property type="match status" value="1"/>
</dbReference>
<dbReference type="Pfam" id="PF20949">
    <property type="entry name" value="Flu_PB2_3rd"/>
    <property type="match status" value="1"/>
</dbReference>
<dbReference type="Pfam" id="PF20950">
    <property type="entry name" value="Flu_PB2_4th"/>
    <property type="match status" value="1"/>
</dbReference>
<dbReference type="Pfam" id="PF00604">
    <property type="entry name" value="Flu_PB2_5th"/>
    <property type="match status" value="1"/>
</dbReference>
<dbReference type="Pfam" id="PF20951">
    <property type="entry name" value="Flu_PB2_6th"/>
    <property type="match status" value="1"/>
</dbReference>
<dbReference type="Pfam" id="PF20952">
    <property type="entry name" value="Flu_PB2_7th"/>
    <property type="match status" value="1"/>
</dbReference>
<dbReference type="SUPFAM" id="SSF160453">
    <property type="entry name" value="PB2 C-terminal domain-like"/>
    <property type="match status" value="1"/>
</dbReference>
<accession>P26109</accession>
<protein>
    <recommendedName>
        <fullName evidence="1">Polymerase basic protein 2</fullName>
    </recommendedName>
    <alternativeName>
        <fullName evidence="1">RNA-directed RNA polymerase subunit P3</fullName>
    </alternativeName>
</protein>
<name>PB2_I85A7</name>
<sequence>MERIKELRDLLSQSRTREILTKTTVDHMAIIKKYTSGRQEKNPALRMKWMMAMKYPITADKRIMEMIPERNEQGQTLWSKTNDAGSDRVMVSPLAVTWWNRNGPATSTVHYPKVYKTYFEKVERLKHGTFGPVHFRNQVKIRRRVDINPGHADLSAKEAQDVIMEVVFPNEVGARILTSESQLTITKEKKEELQDCKIAPLMVAYMLERELVRKTRFLPVAGGTSSVYIEVLHLTQGTCWEQMYTPGGEVRNDDVDQSLIIAARNIVRRATVSADPLASLLEMCHSTQIGGIRMVDILRQNPTEEQAVDICKAAMGLRISSSFSFGGFTFKRTSGSSVKREEEVLTGNLQTLKIRVHEGYEEFTMVGRRATAILRKATRRLIQLIVSGRDEQSIAEAIIVAMVFSQEDCMIKAVRGDLNFVNRANQRLNPMHQLLRHFQKDAKVLFQNWGIEPIDNVMGMIGILPDMTPSTEMSLRGLRVSKMGVDEYSSTERVVVSIDRFLRVRDQRGNVLLSPEEVSETQGTEKLTITYSSSMMWEINGPESVLVNTYQWIIRNWETVKIQWSQDPTMLYNKMEFEPFQSLVPKAARGQYSGFVRTLFQQMRDVLGTFDTVQIIKLLPFAAAPPEQSRMQFSSLTVNVRGSGMRILVRGNSPVFNYNKATKRLTVLGKDAGALTEDPDEGTAGVESAVLRGFLILGKEDKRYGPALSINELSNLAKGEKANVLIGQGDVVLVMKRKRDSSILTDSQTATKRIRMAIN</sequence>
<gene>
    <name evidence="1" type="primary">PB2</name>
</gene>
<feature type="chain" id="PRO_0000078835" description="Polymerase basic protein 2">
    <location>
        <begin position="1"/>
        <end position="759"/>
    </location>
</feature>
<feature type="short sequence motif" description="Nuclear localization signal" evidence="1">
    <location>
        <begin position="736"/>
        <end position="739"/>
    </location>
</feature>
<feature type="site" description="Avian adaptation" evidence="1">
    <location>
        <position position="627"/>
    </location>
</feature>